<proteinExistence type="inferred from homology"/>
<reference key="1">
    <citation type="journal article" date="2001" name="Nature">
        <title>Complete genome sequence of a multiple drug resistant Salmonella enterica serovar Typhi CT18.</title>
        <authorList>
            <person name="Parkhill J."/>
            <person name="Dougan G."/>
            <person name="James K.D."/>
            <person name="Thomson N.R."/>
            <person name="Pickard D."/>
            <person name="Wain J."/>
            <person name="Churcher C.M."/>
            <person name="Mungall K.L."/>
            <person name="Bentley S.D."/>
            <person name="Holden M.T.G."/>
            <person name="Sebaihia M."/>
            <person name="Baker S."/>
            <person name="Basham D."/>
            <person name="Brooks K."/>
            <person name="Chillingworth T."/>
            <person name="Connerton P."/>
            <person name="Cronin A."/>
            <person name="Davis P."/>
            <person name="Davies R.M."/>
            <person name="Dowd L."/>
            <person name="White N."/>
            <person name="Farrar J."/>
            <person name="Feltwell T."/>
            <person name="Hamlin N."/>
            <person name="Haque A."/>
            <person name="Hien T.T."/>
            <person name="Holroyd S."/>
            <person name="Jagels K."/>
            <person name="Krogh A."/>
            <person name="Larsen T.S."/>
            <person name="Leather S."/>
            <person name="Moule S."/>
            <person name="O'Gaora P."/>
            <person name="Parry C."/>
            <person name="Quail M.A."/>
            <person name="Rutherford K.M."/>
            <person name="Simmonds M."/>
            <person name="Skelton J."/>
            <person name="Stevens K."/>
            <person name="Whitehead S."/>
            <person name="Barrell B.G."/>
        </authorList>
    </citation>
    <scope>NUCLEOTIDE SEQUENCE [LARGE SCALE GENOMIC DNA]</scope>
    <source>
        <strain>CT18</strain>
    </source>
</reference>
<reference key="2">
    <citation type="journal article" date="2003" name="J. Bacteriol.">
        <title>Comparative genomics of Salmonella enterica serovar Typhi strains Ty2 and CT18.</title>
        <authorList>
            <person name="Deng W."/>
            <person name="Liou S.-R."/>
            <person name="Plunkett G. III"/>
            <person name="Mayhew G.F."/>
            <person name="Rose D.J."/>
            <person name="Burland V."/>
            <person name="Kodoyianni V."/>
            <person name="Schwartz D.C."/>
            <person name="Blattner F.R."/>
        </authorList>
    </citation>
    <scope>NUCLEOTIDE SEQUENCE [LARGE SCALE GENOMIC DNA]</scope>
    <source>
        <strain>ATCC 700931 / Ty2</strain>
    </source>
</reference>
<comment type="catalytic activity">
    <reaction evidence="2">
        <text>a quinone + NADH + H(+) = a quinol + NAD(+)</text>
        <dbReference type="Rhea" id="RHEA:46160"/>
        <dbReference type="ChEBI" id="CHEBI:15378"/>
        <dbReference type="ChEBI" id="CHEBI:24646"/>
        <dbReference type="ChEBI" id="CHEBI:57540"/>
        <dbReference type="ChEBI" id="CHEBI:57945"/>
        <dbReference type="ChEBI" id="CHEBI:132124"/>
        <dbReference type="EC" id="1.6.5.2"/>
    </reaction>
</comment>
<comment type="catalytic activity">
    <reaction evidence="2">
        <text>a quinone + NADPH + H(+) = a quinol + NADP(+)</text>
        <dbReference type="Rhea" id="RHEA:46164"/>
        <dbReference type="ChEBI" id="CHEBI:15378"/>
        <dbReference type="ChEBI" id="CHEBI:24646"/>
        <dbReference type="ChEBI" id="CHEBI:57783"/>
        <dbReference type="ChEBI" id="CHEBI:58349"/>
        <dbReference type="ChEBI" id="CHEBI:132124"/>
        <dbReference type="EC" id="1.6.5.2"/>
    </reaction>
</comment>
<comment type="cofactor">
    <cofactor evidence="2">
        <name>FMN</name>
        <dbReference type="ChEBI" id="CHEBI:58210"/>
    </cofactor>
    <text evidence="2">Binds 1 FMN per monomer.</text>
</comment>
<comment type="similarity">
    <text evidence="2">Belongs to the WrbA family.</text>
</comment>
<organism>
    <name type="scientific">Salmonella typhi</name>
    <dbReference type="NCBI Taxonomy" id="90370"/>
    <lineage>
        <taxon>Bacteria</taxon>
        <taxon>Pseudomonadati</taxon>
        <taxon>Pseudomonadota</taxon>
        <taxon>Gammaproteobacteria</taxon>
        <taxon>Enterobacterales</taxon>
        <taxon>Enterobacteriaceae</taxon>
        <taxon>Salmonella</taxon>
    </lineage>
</organism>
<feature type="initiator methionine" description="Removed" evidence="1">
    <location>
        <position position="1"/>
    </location>
</feature>
<feature type="chain" id="PRO_0000200756" description="NAD(P)H dehydrogenase (quinone)">
    <location>
        <begin position="2"/>
        <end position="198"/>
    </location>
</feature>
<feature type="domain" description="Flavodoxin-like" evidence="2">
    <location>
        <begin position="4"/>
        <end position="189"/>
    </location>
</feature>
<feature type="binding site" evidence="2">
    <location>
        <begin position="10"/>
        <end position="15"/>
    </location>
    <ligand>
        <name>FMN</name>
        <dbReference type="ChEBI" id="CHEBI:58210"/>
    </ligand>
</feature>
<feature type="binding site" evidence="2">
    <location>
        <position position="12"/>
    </location>
    <ligand>
        <name>NAD(+)</name>
        <dbReference type="ChEBI" id="CHEBI:57540"/>
    </ligand>
</feature>
<feature type="binding site" evidence="2">
    <location>
        <begin position="78"/>
        <end position="80"/>
    </location>
    <ligand>
        <name>FMN</name>
        <dbReference type="ChEBI" id="CHEBI:58210"/>
    </ligand>
</feature>
<feature type="binding site" evidence="2">
    <location>
        <position position="98"/>
    </location>
    <ligand>
        <name>substrate</name>
    </ligand>
</feature>
<feature type="binding site" evidence="2">
    <location>
        <begin position="113"/>
        <end position="118"/>
    </location>
    <ligand>
        <name>FMN</name>
        <dbReference type="ChEBI" id="CHEBI:58210"/>
    </ligand>
</feature>
<feature type="binding site" evidence="2">
    <location>
        <position position="133"/>
    </location>
    <ligand>
        <name>FMN</name>
        <dbReference type="ChEBI" id="CHEBI:58210"/>
    </ligand>
</feature>
<gene>
    <name type="ordered locus">STY1155</name>
    <name type="ordered locus">t1801</name>
</gene>
<accession>Q8Z7N9</accession>
<protein>
    <recommendedName>
        <fullName evidence="2">NAD(P)H dehydrogenase (quinone)</fullName>
        <ecNumber evidence="2">1.6.5.2</ecNumber>
    </recommendedName>
    <alternativeName>
        <fullName>Flavoprotein WrbA</fullName>
    </alternativeName>
    <alternativeName>
        <fullName evidence="2">NAD(P)H:quinone oxidoreductase</fullName>
        <shortName evidence="2">NQO</shortName>
    </alternativeName>
</protein>
<sequence length="198" mass="20838">MAKILVLYYSMYGHIETMAHAVAEGAKKVDGAEVIIKRVPETMPPEIFAKAGGKTQNAPVATPQELADYDAIIFGTPTRFGNMSGQMRTFLDQTGGLWASGALYGKLGGVFSSTGTGGGQEQTITSTWTTLAHHGMVIVPIGYSAQELFDVSQVRGGTPYGATTIAGGDGSRQPSQEELSIARYQGEYVAGLAVKLNG</sequence>
<dbReference type="EC" id="1.6.5.2" evidence="2"/>
<dbReference type="EMBL" id="AL513382">
    <property type="protein sequence ID" value="CAD08244.1"/>
    <property type="molecule type" value="Genomic_DNA"/>
</dbReference>
<dbReference type="EMBL" id="AE014613">
    <property type="protein sequence ID" value="AAO69423.1"/>
    <property type="molecule type" value="Genomic_DNA"/>
</dbReference>
<dbReference type="RefSeq" id="NP_455614.1">
    <property type="nucleotide sequence ID" value="NC_003198.1"/>
</dbReference>
<dbReference type="SMR" id="Q8Z7N9"/>
<dbReference type="STRING" id="220341.gene:17585123"/>
<dbReference type="KEGG" id="stt:t1801"/>
<dbReference type="KEGG" id="sty:STY1155"/>
<dbReference type="PATRIC" id="fig|220341.7.peg.1155"/>
<dbReference type="eggNOG" id="COG0655">
    <property type="taxonomic scope" value="Bacteria"/>
</dbReference>
<dbReference type="HOGENOM" id="CLU_051402_0_2_6"/>
<dbReference type="OMA" id="KFADGNP"/>
<dbReference type="OrthoDB" id="9801479at2"/>
<dbReference type="Proteomes" id="UP000000541">
    <property type="component" value="Chromosome"/>
</dbReference>
<dbReference type="Proteomes" id="UP000002670">
    <property type="component" value="Chromosome"/>
</dbReference>
<dbReference type="GO" id="GO:0016020">
    <property type="term" value="C:membrane"/>
    <property type="evidence" value="ECO:0007669"/>
    <property type="project" value="TreeGrafter"/>
</dbReference>
<dbReference type="GO" id="GO:0050660">
    <property type="term" value="F:flavin adenine dinucleotide binding"/>
    <property type="evidence" value="ECO:0007669"/>
    <property type="project" value="UniProtKB-UniRule"/>
</dbReference>
<dbReference type="GO" id="GO:0010181">
    <property type="term" value="F:FMN binding"/>
    <property type="evidence" value="ECO:0007669"/>
    <property type="project" value="InterPro"/>
</dbReference>
<dbReference type="GO" id="GO:0051287">
    <property type="term" value="F:NAD binding"/>
    <property type="evidence" value="ECO:0007669"/>
    <property type="project" value="UniProtKB-UniRule"/>
</dbReference>
<dbReference type="GO" id="GO:0050136">
    <property type="term" value="F:NADH:ubiquinone reductase (non-electrogenic) activity"/>
    <property type="evidence" value="ECO:0007669"/>
    <property type="project" value="RHEA"/>
</dbReference>
<dbReference type="GO" id="GO:0050661">
    <property type="term" value="F:NADP binding"/>
    <property type="evidence" value="ECO:0007669"/>
    <property type="project" value="UniProtKB-UniRule"/>
</dbReference>
<dbReference type="GO" id="GO:0008753">
    <property type="term" value="F:NADPH dehydrogenase (quinone) activity"/>
    <property type="evidence" value="ECO:0007669"/>
    <property type="project" value="RHEA"/>
</dbReference>
<dbReference type="FunFam" id="3.40.50.360:FF:000004">
    <property type="entry name" value="NAD(P)H dehydrogenase (quinone)"/>
    <property type="match status" value="1"/>
</dbReference>
<dbReference type="Gene3D" id="3.40.50.360">
    <property type="match status" value="1"/>
</dbReference>
<dbReference type="HAMAP" id="MF_01017">
    <property type="entry name" value="NQOR"/>
    <property type="match status" value="1"/>
</dbReference>
<dbReference type="InterPro" id="IPR008254">
    <property type="entry name" value="Flavodoxin/NO_synth"/>
</dbReference>
<dbReference type="InterPro" id="IPR029039">
    <property type="entry name" value="Flavoprotein-like_sf"/>
</dbReference>
<dbReference type="InterPro" id="IPR010089">
    <property type="entry name" value="Flavoprotein_WrbA-like"/>
</dbReference>
<dbReference type="InterPro" id="IPR005025">
    <property type="entry name" value="FMN_Rdtase-like_dom"/>
</dbReference>
<dbReference type="InterPro" id="IPR037513">
    <property type="entry name" value="NQO"/>
</dbReference>
<dbReference type="NCBIfam" id="TIGR01755">
    <property type="entry name" value="flav_wrbA"/>
    <property type="match status" value="1"/>
</dbReference>
<dbReference type="NCBIfam" id="NF002999">
    <property type="entry name" value="PRK03767.1"/>
    <property type="match status" value="1"/>
</dbReference>
<dbReference type="PANTHER" id="PTHR30546">
    <property type="entry name" value="FLAVODOXIN-RELATED PROTEIN WRBA-RELATED"/>
    <property type="match status" value="1"/>
</dbReference>
<dbReference type="PANTHER" id="PTHR30546:SF23">
    <property type="entry name" value="FLAVOPROTEIN-LIKE PROTEIN YCP4-RELATED"/>
    <property type="match status" value="1"/>
</dbReference>
<dbReference type="Pfam" id="PF03358">
    <property type="entry name" value="FMN_red"/>
    <property type="match status" value="1"/>
</dbReference>
<dbReference type="SUPFAM" id="SSF52218">
    <property type="entry name" value="Flavoproteins"/>
    <property type="match status" value="1"/>
</dbReference>
<dbReference type="PROSITE" id="PS50902">
    <property type="entry name" value="FLAVODOXIN_LIKE"/>
    <property type="match status" value="1"/>
</dbReference>
<keyword id="KW-0285">Flavoprotein</keyword>
<keyword id="KW-0288">FMN</keyword>
<keyword id="KW-0520">NAD</keyword>
<keyword id="KW-0521">NADP</keyword>
<keyword id="KW-0547">Nucleotide-binding</keyword>
<keyword id="KW-0560">Oxidoreductase</keyword>
<evidence type="ECO:0000250" key="1"/>
<evidence type="ECO:0000255" key="2">
    <source>
        <dbReference type="HAMAP-Rule" id="MF_01017"/>
    </source>
</evidence>
<name>NQOR_SALTI</name>